<feature type="chain" id="PRO_1000200537" description="UvrABC system protein B">
    <location>
        <begin position="1"/>
        <end position="665"/>
    </location>
</feature>
<feature type="domain" description="Helicase ATP-binding" evidence="1">
    <location>
        <begin position="25"/>
        <end position="176"/>
    </location>
</feature>
<feature type="domain" description="Helicase C-terminal" evidence="1">
    <location>
        <begin position="429"/>
        <end position="595"/>
    </location>
</feature>
<feature type="domain" description="UVR" evidence="1">
    <location>
        <begin position="626"/>
        <end position="661"/>
    </location>
</feature>
<feature type="short sequence motif" description="Beta-hairpin">
    <location>
        <begin position="91"/>
        <end position="114"/>
    </location>
</feature>
<feature type="binding site" evidence="1">
    <location>
        <begin position="38"/>
        <end position="45"/>
    </location>
    <ligand>
        <name>ATP</name>
        <dbReference type="ChEBI" id="CHEBI:30616"/>
    </ligand>
</feature>
<keyword id="KW-0067">ATP-binding</keyword>
<keyword id="KW-0963">Cytoplasm</keyword>
<keyword id="KW-0227">DNA damage</keyword>
<keyword id="KW-0228">DNA excision</keyword>
<keyword id="KW-0234">DNA repair</keyword>
<keyword id="KW-0267">Excision nuclease</keyword>
<keyword id="KW-0347">Helicase</keyword>
<keyword id="KW-0378">Hydrolase</keyword>
<keyword id="KW-0547">Nucleotide-binding</keyword>
<keyword id="KW-1185">Reference proteome</keyword>
<keyword id="KW-0742">SOS response</keyword>
<dbReference type="EMBL" id="CP001291">
    <property type="protein sequence ID" value="ACK70201.1"/>
    <property type="molecule type" value="Genomic_DNA"/>
</dbReference>
<dbReference type="RefSeq" id="WP_012599144.1">
    <property type="nucleotide sequence ID" value="NC_011729.1"/>
</dbReference>
<dbReference type="SMR" id="B7KC96"/>
<dbReference type="STRING" id="65393.PCC7424_1767"/>
<dbReference type="KEGG" id="cyc:PCC7424_1767"/>
<dbReference type="eggNOG" id="COG0556">
    <property type="taxonomic scope" value="Bacteria"/>
</dbReference>
<dbReference type="HOGENOM" id="CLU_009621_2_1_3"/>
<dbReference type="OrthoDB" id="9806651at2"/>
<dbReference type="Proteomes" id="UP000002384">
    <property type="component" value="Chromosome"/>
</dbReference>
<dbReference type="GO" id="GO:0005737">
    <property type="term" value="C:cytoplasm"/>
    <property type="evidence" value="ECO:0007669"/>
    <property type="project" value="UniProtKB-SubCell"/>
</dbReference>
<dbReference type="GO" id="GO:0009380">
    <property type="term" value="C:excinuclease repair complex"/>
    <property type="evidence" value="ECO:0007669"/>
    <property type="project" value="InterPro"/>
</dbReference>
<dbReference type="GO" id="GO:0005524">
    <property type="term" value="F:ATP binding"/>
    <property type="evidence" value="ECO:0007669"/>
    <property type="project" value="UniProtKB-UniRule"/>
</dbReference>
<dbReference type="GO" id="GO:0016887">
    <property type="term" value="F:ATP hydrolysis activity"/>
    <property type="evidence" value="ECO:0007669"/>
    <property type="project" value="InterPro"/>
</dbReference>
<dbReference type="GO" id="GO:0003677">
    <property type="term" value="F:DNA binding"/>
    <property type="evidence" value="ECO:0007669"/>
    <property type="project" value="UniProtKB-UniRule"/>
</dbReference>
<dbReference type="GO" id="GO:0009381">
    <property type="term" value="F:excinuclease ABC activity"/>
    <property type="evidence" value="ECO:0007669"/>
    <property type="project" value="UniProtKB-UniRule"/>
</dbReference>
<dbReference type="GO" id="GO:0004386">
    <property type="term" value="F:helicase activity"/>
    <property type="evidence" value="ECO:0007669"/>
    <property type="project" value="UniProtKB-KW"/>
</dbReference>
<dbReference type="GO" id="GO:0006289">
    <property type="term" value="P:nucleotide-excision repair"/>
    <property type="evidence" value="ECO:0007669"/>
    <property type="project" value="UniProtKB-UniRule"/>
</dbReference>
<dbReference type="GO" id="GO:0009432">
    <property type="term" value="P:SOS response"/>
    <property type="evidence" value="ECO:0007669"/>
    <property type="project" value="UniProtKB-UniRule"/>
</dbReference>
<dbReference type="CDD" id="cd17916">
    <property type="entry name" value="DEXHc_UvrB"/>
    <property type="match status" value="1"/>
</dbReference>
<dbReference type="CDD" id="cd18790">
    <property type="entry name" value="SF2_C_UvrB"/>
    <property type="match status" value="1"/>
</dbReference>
<dbReference type="Gene3D" id="3.40.50.300">
    <property type="entry name" value="P-loop containing nucleotide triphosphate hydrolases"/>
    <property type="match status" value="3"/>
</dbReference>
<dbReference type="Gene3D" id="4.10.860.10">
    <property type="entry name" value="UVR domain"/>
    <property type="match status" value="1"/>
</dbReference>
<dbReference type="HAMAP" id="MF_00204">
    <property type="entry name" value="UvrB"/>
    <property type="match status" value="1"/>
</dbReference>
<dbReference type="InterPro" id="IPR006935">
    <property type="entry name" value="Helicase/UvrB_N"/>
</dbReference>
<dbReference type="InterPro" id="IPR014001">
    <property type="entry name" value="Helicase_ATP-bd"/>
</dbReference>
<dbReference type="InterPro" id="IPR001650">
    <property type="entry name" value="Helicase_C-like"/>
</dbReference>
<dbReference type="InterPro" id="IPR027417">
    <property type="entry name" value="P-loop_NTPase"/>
</dbReference>
<dbReference type="InterPro" id="IPR001943">
    <property type="entry name" value="UVR_dom"/>
</dbReference>
<dbReference type="InterPro" id="IPR036876">
    <property type="entry name" value="UVR_dom_sf"/>
</dbReference>
<dbReference type="InterPro" id="IPR004807">
    <property type="entry name" value="UvrB"/>
</dbReference>
<dbReference type="InterPro" id="IPR041471">
    <property type="entry name" value="UvrB_inter"/>
</dbReference>
<dbReference type="InterPro" id="IPR024759">
    <property type="entry name" value="UvrB_YAD/RRR_dom"/>
</dbReference>
<dbReference type="NCBIfam" id="NF003673">
    <property type="entry name" value="PRK05298.1"/>
    <property type="match status" value="1"/>
</dbReference>
<dbReference type="NCBIfam" id="TIGR00631">
    <property type="entry name" value="uvrb"/>
    <property type="match status" value="1"/>
</dbReference>
<dbReference type="PANTHER" id="PTHR24029">
    <property type="entry name" value="UVRABC SYSTEM PROTEIN B"/>
    <property type="match status" value="1"/>
</dbReference>
<dbReference type="PANTHER" id="PTHR24029:SF0">
    <property type="entry name" value="UVRABC SYSTEM PROTEIN B"/>
    <property type="match status" value="1"/>
</dbReference>
<dbReference type="Pfam" id="PF00271">
    <property type="entry name" value="Helicase_C"/>
    <property type="match status" value="1"/>
</dbReference>
<dbReference type="Pfam" id="PF04851">
    <property type="entry name" value="ResIII"/>
    <property type="match status" value="1"/>
</dbReference>
<dbReference type="Pfam" id="PF02151">
    <property type="entry name" value="UVR"/>
    <property type="match status" value="1"/>
</dbReference>
<dbReference type="Pfam" id="PF12344">
    <property type="entry name" value="UvrB"/>
    <property type="match status" value="1"/>
</dbReference>
<dbReference type="Pfam" id="PF17757">
    <property type="entry name" value="UvrB_inter"/>
    <property type="match status" value="1"/>
</dbReference>
<dbReference type="SMART" id="SM00487">
    <property type="entry name" value="DEXDc"/>
    <property type="match status" value="1"/>
</dbReference>
<dbReference type="SMART" id="SM00490">
    <property type="entry name" value="HELICc"/>
    <property type="match status" value="1"/>
</dbReference>
<dbReference type="SUPFAM" id="SSF46600">
    <property type="entry name" value="C-terminal UvrC-binding domain of UvrB"/>
    <property type="match status" value="1"/>
</dbReference>
<dbReference type="SUPFAM" id="SSF52540">
    <property type="entry name" value="P-loop containing nucleoside triphosphate hydrolases"/>
    <property type="match status" value="2"/>
</dbReference>
<dbReference type="PROSITE" id="PS51192">
    <property type="entry name" value="HELICASE_ATP_BIND_1"/>
    <property type="match status" value="1"/>
</dbReference>
<dbReference type="PROSITE" id="PS51194">
    <property type="entry name" value="HELICASE_CTER"/>
    <property type="match status" value="1"/>
</dbReference>
<dbReference type="PROSITE" id="PS50151">
    <property type="entry name" value="UVR"/>
    <property type="match status" value="1"/>
</dbReference>
<accession>B7KC96</accession>
<proteinExistence type="inferred from homology"/>
<name>UVRB_GLOC7</name>
<evidence type="ECO:0000255" key="1">
    <source>
        <dbReference type="HAMAP-Rule" id="MF_00204"/>
    </source>
</evidence>
<reference key="1">
    <citation type="journal article" date="2011" name="MBio">
        <title>Novel metabolic attributes of the genus Cyanothece, comprising a group of unicellular nitrogen-fixing Cyanobacteria.</title>
        <authorList>
            <person name="Bandyopadhyay A."/>
            <person name="Elvitigala T."/>
            <person name="Welsh E."/>
            <person name="Stockel J."/>
            <person name="Liberton M."/>
            <person name="Min H."/>
            <person name="Sherman L.A."/>
            <person name="Pakrasi H.B."/>
        </authorList>
    </citation>
    <scope>NUCLEOTIDE SEQUENCE [LARGE SCALE GENOMIC DNA]</scope>
    <source>
        <strain>PCC 7424</strain>
    </source>
</reference>
<gene>
    <name evidence="1" type="primary">uvrB</name>
    <name type="ordered locus">PCC7424_1767</name>
</gene>
<protein>
    <recommendedName>
        <fullName evidence="1">UvrABC system protein B</fullName>
        <shortName evidence="1">Protein UvrB</shortName>
    </recommendedName>
    <alternativeName>
        <fullName evidence="1">Excinuclease ABC subunit B</fullName>
    </alternativeName>
</protein>
<organism>
    <name type="scientific">Gloeothece citriformis (strain PCC 7424)</name>
    <name type="common">Cyanothece sp. (strain PCC 7424)</name>
    <dbReference type="NCBI Taxonomy" id="65393"/>
    <lineage>
        <taxon>Bacteria</taxon>
        <taxon>Bacillati</taxon>
        <taxon>Cyanobacteriota</taxon>
        <taxon>Cyanophyceae</taxon>
        <taxon>Oscillatoriophycideae</taxon>
        <taxon>Chroococcales</taxon>
        <taxon>Aphanothecaceae</taxon>
        <taxon>Gloeothece</taxon>
        <taxon>Gloeothece citriformis</taxon>
    </lineage>
</organism>
<sequence>MNLFHLQAPFQATGDQPQAIAQLVNSIEKGNRFQTLLGATGTGKTFTIAATIEKIGKPTLVLAHNKTLAAQLCNELRQFFPENAVEYFISYYDYYQPEAYIPVSDTYIEKSASINDEIDMLRHSATRSLFERRDVVVVASISCIYGLGMPSEYLKASIGLEVGKEINQRQLLRDLVSVQYSRNDLDLQRGRFRLRGDVLELVPAYEDRVIRVEFFGDEIDAIRYLDPVTGNSLQSLERVNIYPARHFVTPDDQLEAACQGIELELEDRLEELEKQGKLLEAQRLGQRTRYDLELLREVGYCNGVENYSRYLAGREPGQPPECLIDYFPKDWLLVIDESHVTIPQLRGMYNGDQARKKVLIEHGFRLPSAADNRPLKAEEFWEKVNQCVFVSATPGNWEIEQSQGQVIEQIIRPTGVLDPEIFVRPTEGQVDDLLGEIKQRIKRKERVLITTLTKRMAEDLTEYFQERGVKVQYLHSEISSIERIEILQNLREGEFDVLIGVNLLREGLDLPEVSLVAILDADKEGFLRAERSLIQTIGRAARHIQGQAILYADNLTDSMIKAMEETERRRNIQMAHNKRHGITPQPIVTRSSNAILSFLDISRRLNAQQLEKVYDQADELPLEKVPELIGQLEEQMKEAAKKLEFEEAAKYRDRIQHLRDKLLGH</sequence>
<comment type="function">
    <text evidence="1">The UvrABC repair system catalyzes the recognition and processing of DNA lesions. A damage recognition complex composed of 2 UvrA and 2 UvrB subunits scans DNA for abnormalities. Upon binding of the UvrA(2)B(2) complex to a putative damaged site, the DNA wraps around one UvrB monomer. DNA wrap is dependent on ATP binding by UvrB and probably causes local melting of the DNA helix, facilitating insertion of UvrB beta-hairpin between the DNA strands. Then UvrB probes one DNA strand for the presence of a lesion. If a lesion is found the UvrA subunits dissociate and the UvrB-DNA preincision complex is formed. This complex is subsequently bound by UvrC and the second UvrB is released. If no lesion is found, the DNA wraps around the other UvrB subunit that will check the other stand for damage.</text>
</comment>
<comment type="subunit">
    <text evidence="1">Forms a heterotetramer with UvrA during the search for lesions. Interacts with UvrC in an incision complex.</text>
</comment>
<comment type="subcellular location">
    <subcellularLocation>
        <location evidence="1">Cytoplasm</location>
    </subcellularLocation>
</comment>
<comment type="domain">
    <text evidence="1">The beta-hairpin motif is involved in DNA binding.</text>
</comment>
<comment type="similarity">
    <text evidence="1">Belongs to the UvrB family.</text>
</comment>